<reference key="1">
    <citation type="journal article" date="2002" name="Nature">
        <title>Complete genome sequence of the model actinomycete Streptomyces coelicolor A3(2).</title>
        <authorList>
            <person name="Bentley S.D."/>
            <person name="Chater K.F."/>
            <person name="Cerdeno-Tarraga A.-M."/>
            <person name="Challis G.L."/>
            <person name="Thomson N.R."/>
            <person name="James K.D."/>
            <person name="Harris D.E."/>
            <person name="Quail M.A."/>
            <person name="Kieser H."/>
            <person name="Harper D."/>
            <person name="Bateman A."/>
            <person name="Brown S."/>
            <person name="Chandra G."/>
            <person name="Chen C.W."/>
            <person name="Collins M."/>
            <person name="Cronin A."/>
            <person name="Fraser A."/>
            <person name="Goble A."/>
            <person name="Hidalgo J."/>
            <person name="Hornsby T."/>
            <person name="Howarth S."/>
            <person name="Huang C.-H."/>
            <person name="Kieser T."/>
            <person name="Larke L."/>
            <person name="Murphy L.D."/>
            <person name="Oliver K."/>
            <person name="O'Neil S."/>
            <person name="Rabbinowitsch E."/>
            <person name="Rajandream M.A."/>
            <person name="Rutherford K.M."/>
            <person name="Rutter S."/>
            <person name="Seeger K."/>
            <person name="Saunders D."/>
            <person name="Sharp S."/>
            <person name="Squares R."/>
            <person name="Squares S."/>
            <person name="Taylor K."/>
            <person name="Warren T."/>
            <person name="Wietzorrek A."/>
            <person name="Woodward J.R."/>
            <person name="Barrell B.G."/>
            <person name="Parkhill J."/>
            <person name="Hopwood D.A."/>
        </authorList>
    </citation>
    <scope>NUCLEOTIDE SEQUENCE [LARGE SCALE GENOMIC DNA]</scope>
    <source>
        <strain>ATCC BAA-471 / A3(2) / M145</strain>
    </source>
</reference>
<dbReference type="EMBL" id="AL939121">
    <property type="protein sequence ID" value="CAB82082.1"/>
    <property type="molecule type" value="Genomic_DNA"/>
</dbReference>
<dbReference type="RefSeq" id="NP_628873.1">
    <property type="nucleotide sequence ID" value="NC_003888.3"/>
</dbReference>
<dbReference type="RefSeq" id="WP_003974255.1">
    <property type="nucleotide sequence ID" value="NZ_VNID01000016.1"/>
</dbReference>
<dbReference type="SMR" id="Q9L0C8"/>
<dbReference type="FunCoup" id="Q9L0C8">
    <property type="interactions" value="399"/>
</dbReference>
<dbReference type="STRING" id="100226.gene:17762363"/>
<dbReference type="PaxDb" id="100226-SCO4714"/>
<dbReference type="GeneID" id="97462946"/>
<dbReference type="KEGG" id="sco:SCO4714"/>
<dbReference type="PATRIC" id="fig|100226.15.peg.4785"/>
<dbReference type="eggNOG" id="COG0094">
    <property type="taxonomic scope" value="Bacteria"/>
</dbReference>
<dbReference type="HOGENOM" id="CLU_061015_2_1_11"/>
<dbReference type="InParanoid" id="Q9L0C8"/>
<dbReference type="OrthoDB" id="9806626at2"/>
<dbReference type="PhylomeDB" id="Q9L0C8"/>
<dbReference type="Proteomes" id="UP000001973">
    <property type="component" value="Chromosome"/>
</dbReference>
<dbReference type="GO" id="GO:0022625">
    <property type="term" value="C:cytosolic large ribosomal subunit"/>
    <property type="evidence" value="ECO:0000318"/>
    <property type="project" value="GO_Central"/>
</dbReference>
<dbReference type="GO" id="GO:0003723">
    <property type="term" value="F:RNA binding"/>
    <property type="evidence" value="ECO:0000318"/>
    <property type="project" value="GO_Central"/>
</dbReference>
<dbReference type="GO" id="GO:0019843">
    <property type="term" value="F:rRNA binding"/>
    <property type="evidence" value="ECO:0007669"/>
    <property type="project" value="UniProtKB-UniRule"/>
</dbReference>
<dbReference type="GO" id="GO:0003735">
    <property type="term" value="F:structural constituent of ribosome"/>
    <property type="evidence" value="ECO:0000318"/>
    <property type="project" value="GO_Central"/>
</dbReference>
<dbReference type="GO" id="GO:0000049">
    <property type="term" value="F:tRNA binding"/>
    <property type="evidence" value="ECO:0007669"/>
    <property type="project" value="UniProtKB-UniRule"/>
</dbReference>
<dbReference type="GO" id="GO:0006412">
    <property type="term" value="P:translation"/>
    <property type="evidence" value="ECO:0000318"/>
    <property type="project" value="GO_Central"/>
</dbReference>
<dbReference type="FunFam" id="3.30.1440.10:FF:000001">
    <property type="entry name" value="50S ribosomal protein L5"/>
    <property type="match status" value="1"/>
</dbReference>
<dbReference type="Gene3D" id="3.30.1440.10">
    <property type="match status" value="1"/>
</dbReference>
<dbReference type="HAMAP" id="MF_01333_B">
    <property type="entry name" value="Ribosomal_uL5_B"/>
    <property type="match status" value="1"/>
</dbReference>
<dbReference type="InterPro" id="IPR002132">
    <property type="entry name" value="Ribosomal_uL5"/>
</dbReference>
<dbReference type="InterPro" id="IPR020930">
    <property type="entry name" value="Ribosomal_uL5_bac-type"/>
</dbReference>
<dbReference type="InterPro" id="IPR031309">
    <property type="entry name" value="Ribosomal_uL5_C"/>
</dbReference>
<dbReference type="InterPro" id="IPR020929">
    <property type="entry name" value="Ribosomal_uL5_CS"/>
</dbReference>
<dbReference type="InterPro" id="IPR022803">
    <property type="entry name" value="Ribosomal_uL5_dom_sf"/>
</dbReference>
<dbReference type="InterPro" id="IPR031310">
    <property type="entry name" value="Ribosomal_uL5_N"/>
</dbReference>
<dbReference type="NCBIfam" id="NF000585">
    <property type="entry name" value="PRK00010.1"/>
    <property type="match status" value="1"/>
</dbReference>
<dbReference type="PANTHER" id="PTHR11994">
    <property type="entry name" value="60S RIBOSOMAL PROTEIN L11-RELATED"/>
    <property type="match status" value="1"/>
</dbReference>
<dbReference type="Pfam" id="PF00281">
    <property type="entry name" value="Ribosomal_L5"/>
    <property type="match status" value="1"/>
</dbReference>
<dbReference type="Pfam" id="PF00673">
    <property type="entry name" value="Ribosomal_L5_C"/>
    <property type="match status" value="1"/>
</dbReference>
<dbReference type="PIRSF" id="PIRSF002161">
    <property type="entry name" value="Ribosomal_L5"/>
    <property type="match status" value="1"/>
</dbReference>
<dbReference type="SUPFAM" id="SSF55282">
    <property type="entry name" value="RL5-like"/>
    <property type="match status" value="1"/>
</dbReference>
<dbReference type="PROSITE" id="PS00358">
    <property type="entry name" value="RIBOSOMAL_L5"/>
    <property type="match status" value="1"/>
</dbReference>
<sequence>MATTTTPRLKTKYREEIAGKLREEFSYENVMQIPGLVKIVVNMGVGDAARDSKLIEGAIRDLTTITGQKPAVTKARKSIAQFKLREGQPIGAHVTLRGDRMWEFLDRTLSLALPRIRDFRGLSPKQFDGRGNYTFGLTEQVMFHEIDQDKIDRTRGMDITVVTTATNDAEGRALLRHLGFPFKEA</sequence>
<proteinExistence type="inferred from homology"/>
<name>RL5_STRCO</name>
<gene>
    <name evidence="1" type="primary">rplE</name>
    <name type="ordered locus">SCO4714</name>
    <name type="ORF">SCD31.39</name>
</gene>
<accession>Q9L0C8</accession>
<evidence type="ECO:0000255" key="1">
    <source>
        <dbReference type="HAMAP-Rule" id="MF_01333"/>
    </source>
</evidence>
<evidence type="ECO:0000305" key="2"/>
<comment type="function">
    <text evidence="1">This is one of the proteins that bind and probably mediate the attachment of the 5S RNA into the large ribosomal subunit, where it forms part of the central protuberance. In the 70S ribosome it contacts protein S13 of the 30S subunit (bridge B1b), connecting the 2 subunits; this bridge is implicated in subunit movement. Contacts the P site tRNA; the 5S rRNA and some of its associated proteins might help stabilize positioning of ribosome-bound tRNAs.</text>
</comment>
<comment type="subunit">
    <text evidence="1">Part of the 50S ribosomal subunit; part of the 5S rRNA/L5/L18/L25 subcomplex. Contacts the 5S rRNA and the P site tRNA. Forms a bridge to the 30S subunit in the 70S ribosome.</text>
</comment>
<comment type="similarity">
    <text evidence="1">Belongs to the universal ribosomal protein uL5 family.</text>
</comment>
<feature type="chain" id="PRO_0000124999" description="Large ribosomal subunit protein uL5">
    <location>
        <begin position="1"/>
        <end position="185"/>
    </location>
</feature>
<protein>
    <recommendedName>
        <fullName evidence="1">Large ribosomal subunit protein uL5</fullName>
    </recommendedName>
    <alternativeName>
        <fullName evidence="2">50S ribosomal protein L5</fullName>
    </alternativeName>
</protein>
<organism>
    <name type="scientific">Streptomyces coelicolor (strain ATCC BAA-471 / A3(2) / M145)</name>
    <dbReference type="NCBI Taxonomy" id="100226"/>
    <lineage>
        <taxon>Bacteria</taxon>
        <taxon>Bacillati</taxon>
        <taxon>Actinomycetota</taxon>
        <taxon>Actinomycetes</taxon>
        <taxon>Kitasatosporales</taxon>
        <taxon>Streptomycetaceae</taxon>
        <taxon>Streptomyces</taxon>
        <taxon>Streptomyces albidoflavus group</taxon>
    </lineage>
</organism>
<keyword id="KW-1185">Reference proteome</keyword>
<keyword id="KW-0687">Ribonucleoprotein</keyword>
<keyword id="KW-0689">Ribosomal protein</keyword>
<keyword id="KW-0694">RNA-binding</keyword>
<keyword id="KW-0699">rRNA-binding</keyword>
<keyword id="KW-0820">tRNA-binding</keyword>